<keyword id="KW-0012">Acyltransferase</keyword>
<keyword id="KW-0963">Cytoplasm</keyword>
<keyword id="KW-1185">Reference proteome</keyword>
<keyword id="KW-0808">Transferase</keyword>
<proteinExistence type="inferred from homology"/>
<sequence>MIQNKLQNFVDTLPISPEKSCSYYPERLSQIQYFPFPEEISKEVLQFFFDSGFRRNGNILYRTSCCGCKDCLSYRIPLDQFVPSRNRKKLLKKNSDLKICFESPNLTLEKEILYLRYQRSRYQNFVIEESDQELLEGMRWNLFEYKENSLEMTLSLDGKILCFMILDFASDSLSAVYSVYDPDYPDRSLGSFAILSSILYAKELGMKYFHLGYFLPGHPNMDYKKYWTPAQIREPVSNENRWIETDDFQKRYSDFSW</sequence>
<evidence type="ECO:0000255" key="1">
    <source>
        <dbReference type="HAMAP-Rule" id="MF_00689"/>
    </source>
</evidence>
<dbReference type="EC" id="2.3.2.29" evidence="1"/>
<dbReference type="EMBL" id="AE010300">
    <property type="protein sequence ID" value="AAN49173.1"/>
    <property type="molecule type" value="Genomic_DNA"/>
</dbReference>
<dbReference type="RefSeq" id="NP_712155.1">
    <property type="nucleotide sequence ID" value="NC_004342.2"/>
</dbReference>
<dbReference type="RefSeq" id="WP_000615647.1">
    <property type="nucleotide sequence ID" value="NC_004342.2"/>
</dbReference>
<dbReference type="SMR" id="Q8F4R6"/>
<dbReference type="STRING" id="189518.LA_1974"/>
<dbReference type="PaxDb" id="189518-LA_1974"/>
<dbReference type="EnsemblBacteria" id="AAN49173">
    <property type="protein sequence ID" value="AAN49173"/>
    <property type="gene ID" value="LA_1974"/>
</dbReference>
<dbReference type="KEGG" id="lil:LA_1974"/>
<dbReference type="PATRIC" id="fig|189518.3.peg.1968"/>
<dbReference type="HOGENOM" id="CLU_077607_0_0_12"/>
<dbReference type="InParanoid" id="Q8F4R6"/>
<dbReference type="OrthoDB" id="9782022at2"/>
<dbReference type="Proteomes" id="UP000001408">
    <property type="component" value="Chromosome I"/>
</dbReference>
<dbReference type="GO" id="GO:0005737">
    <property type="term" value="C:cytoplasm"/>
    <property type="evidence" value="ECO:0000318"/>
    <property type="project" value="GO_Central"/>
</dbReference>
<dbReference type="GO" id="GO:0004057">
    <property type="term" value="F:arginyl-tRNA--protein transferase activity"/>
    <property type="evidence" value="ECO:0000318"/>
    <property type="project" value="GO_Central"/>
</dbReference>
<dbReference type="GO" id="GO:0008914">
    <property type="term" value="F:leucyl-tRNA--protein transferase activity"/>
    <property type="evidence" value="ECO:0007669"/>
    <property type="project" value="UniProtKB-UniRule"/>
</dbReference>
<dbReference type="GO" id="GO:0010498">
    <property type="term" value="P:proteasomal protein catabolic process"/>
    <property type="evidence" value="ECO:0000318"/>
    <property type="project" value="GO_Central"/>
</dbReference>
<dbReference type="GO" id="GO:0071596">
    <property type="term" value="P:ubiquitin-dependent protein catabolic process via the N-end rule pathway"/>
    <property type="evidence" value="ECO:0007669"/>
    <property type="project" value="InterPro"/>
</dbReference>
<dbReference type="HAMAP" id="MF_00689">
    <property type="entry name" value="Bpt"/>
    <property type="match status" value="1"/>
</dbReference>
<dbReference type="InterPro" id="IPR016181">
    <property type="entry name" value="Acyl_CoA_acyltransferase"/>
</dbReference>
<dbReference type="InterPro" id="IPR017138">
    <property type="entry name" value="Asp_Glu_LeuTrfase"/>
</dbReference>
<dbReference type="InterPro" id="IPR030700">
    <property type="entry name" value="N-end_Aminoacyl_Trfase"/>
</dbReference>
<dbReference type="InterPro" id="IPR007472">
    <property type="entry name" value="N-end_Aminoacyl_Trfase_C"/>
</dbReference>
<dbReference type="InterPro" id="IPR007471">
    <property type="entry name" value="N-end_Aminoacyl_Trfase_N"/>
</dbReference>
<dbReference type="NCBIfam" id="NF002346">
    <property type="entry name" value="PRK01305.2-3"/>
    <property type="match status" value="1"/>
</dbReference>
<dbReference type="PANTHER" id="PTHR21367">
    <property type="entry name" value="ARGININE-TRNA-PROTEIN TRANSFERASE 1"/>
    <property type="match status" value="1"/>
</dbReference>
<dbReference type="PANTHER" id="PTHR21367:SF1">
    <property type="entry name" value="ARGINYL-TRNA--PROTEIN TRANSFERASE 1"/>
    <property type="match status" value="1"/>
</dbReference>
<dbReference type="Pfam" id="PF04377">
    <property type="entry name" value="ATE_C"/>
    <property type="match status" value="1"/>
</dbReference>
<dbReference type="Pfam" id="PF04376">
    <property type="entry name" value="ATE_N"/>
    <property type="match status" value="1"/>
</dbReference>
<dbReference type="PIRSF" id="PIRSF037208">
    <property type="entry name" value="ATE_pro_prd"/>
    <property type="match status" value="1"/>
</dbReference>
<dbReference type="SUPFAM" id="SSF55729">
    <property type="entry name" value="Acyl-CoA N-acyltransferases (Nat)"/>
    <property type="match status" value="1"/>
</dbReference>
<name>BPT_LEPIN</name>
<comment type="function">
    <text evidence="1">Functions in the N-end rule pathway of protein degradation where it conjugates Leu from its aminoacyl-tRNA to the N-termini of proteins containing an N-terminal aspartate or glutamate.</text>
</comment>
<comment type="catalytic activity">
    <reaction evidence="1">
        <text>N-terminal L-glutamyl-[protein] + L-leucyl-tRNA(Leu) = N-terminal L-leucyl-L-glutamyl-[protein] + tRNA(Leu) + H(+)</text>
        <dbReference type="Rhea" id="RHEA:50412"/>
        <dbReference type="Rhea" id="RHEA-COMP:9613"/>
        <dbReference type="Rhea" id="RHEA-COMP:9622"/>
        <dbReference type="Rhea" id="RHEA-COMP:12664"/>
        <dbReference type="Rhea" id="RHEA-COMP:12668"/>
        <dbReference type="ChEBI" id="CHEBI:15378"/>
        <dbReference type="ChEBI" id="CHEBI:64721"/>
        <dbReference type="ChEBI" id="CHEBI:78442"/>
        <dbReference type="ChEBI" id="CHEBI:78494"/>
        <dbReference type="ChEBI" id="CHEBI:133041"/>
        <dbReference type="EC" id="2.3.2.29"/>
    </reaction>
</comment>
<comment type="catalytic activity">
    <reaction evidence="1">
        <text>N-terminal L-aspartyl-[protein] + L-leucyl-tRNA(Leu) = N-terminal L-leucyl-L-aspartyl-[protein] + tRNA(Leu) + H(+)</text>
        <dbReference type="Rhea" id="RHEA:50420"/>
        <dbReference type="Rhea" id="RHEA-COMP:9613"/>
        <dbReference type="Rhea" id="RHEA-COMP:9622"/>
        <dbReference type="Rhea" id="RHEA-COMP:12669"/>
        <dbReference type="Rhea" id="RHEA-COMP:12674"/>
        <dbReference type="ChEBI" id="CHEBI:15378"/>
        <dbReference type="ChEBI" id="CHEBI:64720"/>
        <dbReference type="ChEBI" id="CHEBI:78442"/>
        <dbReference type="ChEBI" id="CHEBI:78494"/>
        <dbReference type="ChEBI" id="CHEBI:133042"/>
        <dbReference type="EC" id="2.3.2.29"/>
    </reaction>
</comment>
<comment type="subcellular location">
    <subcellularLocation>
        <location evidence="1">Cytoplasm</location>
    </subcellularLocation>
</comment>
<comment type="similarity">
    <text evidence="1">Belongs to the R-transferase family. Bpt subfamily.</text>
</comment>
<reference key="1">
    <citation type="journal article" date="2003" name="Nature">
        <title>Unique physiological and pathogenic features of Leptospira interrogans revealed by whole-genome sequencing.</title>
        <authorList>
            <person name="Ren S.-X."/>
            <person name="Fu G."/>
            <person name="Jiang X.-G."/>
            <person name="Zeng R."/>
            <person name="Miao Y.-G."/>
            <person name="Xu H."/>
            <person name="Zhang Y.-X."/>
            <person name="Xiong H."/>
            <person name="Lu G."/>
            <person name="Lu L.-F."/>
            <person name="Jiang H.-Q."/>
            <person name="Jia J."/>
            <person name="Tu Y.-F."/>
            <person name="Jiang J.-X."/>
            <person name="Gu W.-Y."/>
            <person name="Zhang Y.-Q."/>
            <person name="Cai Z."/>
            <person name="Sheng H.-H."/>
            <person name="Yin H.-F."/>
            <person name="Zhang Y."/>
            <person name="Zhu G.-F."/>
            <person name="Wan M."/>
            <person name="Huang H.-L."/>
            <person name="Qian Z."/>
            <person name="Wang S.-Y."/>
            <person name="Ma W."/>
            <person name="Yao Z.-J."/>
            <person name="Shen Y."/>
            <person name="Qiang B.-Q."/>
            <person name="Xia Q.-C."/>
            <person name="Guo X.-K."/>
            <person name="Danchin A."/>
            <person name="Saint Girons I."/>
            <person name="Somerville R.L."/>
            <person name="Wen Y.-M."/>
            <person name="Shi M.-H."/>
            <person name="Chen Z."/>
            <person name="Xu J.-G."/>
            <person name="Zhao G.-P."/>
        </authorList>
    </citation>
    <scope>NUCLEOTIDE SEQUENCE [LARGE SCALE GENOMIC DNA]</scope>
    <source>
        <strain>56601</strain>
    </source>
</reference>
<protein>
    <recommendedName>
        <fullName evidence="1">Aspartate/glutamate leucyltransferase</fullName>
        <ecNumber evidence="1">2.3.2.29</ecNumber>
    </recommendedName>
</protein>
<gene>
    <name evidence="1" type="primary">bpt</name>
    <name type="ordered locus">LA_1974</name>
</gene>
<feature type="chain" id="PRO_0000195106" description="Aspartate/glutamate leucyltransferase">
    <location>
        <begin position="1"/>
        <end position="257"/>
    </location>
</feature>
<accession>Q8F4R6</accession>
<organism>
    <name type="scientific">Leptospira interrogans serogroup Icterohaemorrhagiae serovar Lai (strain 56601)</name>
    <dbReference type="NCBI Taxonomy" id="189518"/>
    <lineage>
        <taxon>Bacteria</taxon>
        <taxon>Pseudomonadati</taxon>
        <taxon>Spirochaetota</taxon>
        <taxon>Spirochaetia</taxon>
        <taxon>Leptospirales</taxon>
        <taxon>Leptospiraceae</taxon>
        <taxon>Leptospira</taxon>
    </lineage>
</organism>